<comment type="function">
    <text evidence="1">Participates actively in the response to hyperosmotic and heat shock by preventing the aggregation of stress-denatured proteins and by disaggregating proteins, also in an autonomous, DnaK-independent fashion. Unfolded proteins bind initially to DnaJ; upon interaction with the DnaJ-bound protein, DnaK hydrolyzes its bound ATP, resulting in the formation of a stable complex. GrpE releases ADP from DnaK; ATP binding to DnaK triggers the release of the substrate protein, thus completing the reaction cycle. Several rounds of ATP-dependent interactions between DnaJ, DnaK and GrpE are required for fully efficient folding. Also involved, together with DnaK and GrpE, in the DNA replication of plasmids through activation of initiation proteins.</text>
</comment>
<comment type="cofactor">
    <cofactor evidence="1">
        <name>Zn(2+)</name>
        <dbReference type="ChEBI" id="CHEBI:29105"/>
    </cofactor>
    <text evidence="1">Binds 2 Zn(2+) ions per monomer.</text>
</comment>
<comment type="subunit">
    <text evidence="1">Homodimer.</text>
</comment>
<comment type="subcellular location">
    <subcellularLocation>
        <location evidence="1">Cytoplasm</location>
    </subcellularLocation>
</comment>
<comment type="domain">
    <text evidence="1">The J domain is necessary and sufficient to stimulate DnaK ATPase activity. Zinc center 1 plays an important role in the autonomous, DnaK-independent chaperone activity of DnaJ. Zinc center 2 is essential for interaction with DnaK and for DnaJ activity.</text>
</comment>
<comment type="similarity">
    <text evidence="1">Belongs to the DnaJ family.</text>
</comment>
<gene>
    <name evidence="1" type="primary">dnaJ</name>
    <name type="ordered locus">RPA0334</name>
</gene>
<evidence type="ECO:0000255" key="1">
    <source>
        <dbReference type="HAMAP-Rule" id="MF_01152"/>
    </source>
</evidence>
<name>DNAJ_RHOPA</name>
<dbReference type="EMBL" id="BX572594">
    <property type="protein sequence ID" value="CAE25778.1"/>
    <property type="molecule type" value="Genomic_DNA"/>
</dbReference>
<dbReference type="RefSeq" id="WP_011155902.1">
    <property type="nucleotide sequence ID" value="NZ_CP116810.1"/>
</dbReference>
<dbReference type="SMR" id="Q6NCY3"/>
<dbReference type="STRING" id="258594.RPA0334"/>
<dbReference type="GeneID" id="66891345"/>
<dbReference type="eggNOG" id="COG0484">
    <property type="taxonomic scope" value="Bacteria"/>
</dbReference>
<dbReference type="HOGENOM" id="CLU_017633_0_7_5"/>
<dbReference type="PhylomeDB" id="Q6NCY3"/>
<dbReference type="GO" id="GO:0005737">
    <property type="term" value="C:cytoplasm"/>
    <property type="evidence" value="ECO:0007669"/>
    <property type="project" value="UniProtKB-SubCell"/>
</dbReference>
<dbReference type="GO" id="GO:0005524">
    <property type="term" value="F:ATP binding"/>
    <property type="evidence" value="ECO:0007669"/>
    <property type="project" value="InterPro"/>
</dbReference>
<dbReference type="GO" id="GO:0031072">
    <property type="term" value="F:heat shock protein binding"/>
    <property type="evidence" value="ECO:0007669"/>
    <property type="project" value="InterPro"/>
</dbReference>
<dbReference type="GO" id="GO:0051082">
    <property type="term" value="F:unfolded protein binding"/>
    <property type="evidence" value="ECO:0007669"/>
    <property type="project" value="UniProtKB-UniRule"/>
</dbReference>
<dbReference type="GO" id="GO:0008270">
    <property type="term" value="F:zinc ion binding"/>
    <property type="evidence" value="ECO:0007669"/>
    <property type="project" value="UniProtKB-UniRule"/>
</dbReference>
<dbReference type="GO" id="GO:0051085">
    <property type="term" value="P:chaperone cofactor-dependent protein refolding"/>
    <property type="evidence" value="ECO:0007669"/>
    <property type="project" value="TreeGrafter"/>
</dbReference>
<dbReference type="GO" id="GO:0006260">
    <property type="term" value="P:DNA replication"/>
    <property type="evidence" value="ECO:0007669"/>
    <property type="project" value="UniProtKB-KW"/>
</dbReference>
<dbReference type="GO" id="GO:0042026">
    <property type="term" value="P:protein refolding"/>
    <property type="evidence" value="ECO:0007669"/>
    <property type="project" value="TreeGrafter"/>
</dbReference>
<dbReference type="GO" id="GO:0009408">
    <property type="term" value="P:response to heat"/>
    <property type="evidence" value="ECO:0007669"/>
    <property type="project" value="InterPro"/>
</dbReference>
<dbReference type="CDD" id="cd06257">
    <property type="entry name" value="DnaJ"/>
    <property type="match status" value="1"/>
</dbReference>
<dbReference type="CDD" id="cd10747">
    <property type="entry name" value="DnaJ_C"/>
    <property type="match status" value="1"/>
</dbReference>
<dbReference type="CDD" id="cd10719">
    <property type="entry name" value="DnaJ_zf"/>
    <property type="match status" value="1"/>
</dbReference>
<dbReference type="FunFam" id="1.10.287.110:FF:000034">
    <property type="entry name" value="Chaperone protein DnaJ"/>
    <property type="match status" value="1"/>
</dbReference>
<dbReference type="FunFam" id="2.10.230.10:FF:000002">
    <property type="entry name" value="Molecular chaperone DnaJ"/>
    <property type="match status" value="1"/>
</dbReference>
<dbReference type="FunFam" id="2.60.260.20:FF:000004">
    <property type="entry name" value="Molecular chaperone DnaJ"/>
    <property type="match status" value="1"/>
</dbReference>
<dbReference type="Gene3D" id="1.10.287.110">
    <property type="entry name" value="DnaJ domain"/>
    <property type="match status" value="1"/>
</dbReference>
<dbReference type="Gene3D" id="2.10.230.10">
    <property type="entry name" value="Heat shock protein DnaJ, cysteine-rich domain"/>
    <property type="match status" value="1"/>
</dbReference>
<dbReference type="Gene3D" id="2.60.260.20">
    <property type="entry name" value="Urease metallochaperone UreE, N-terminal domain"/>
    <property type="match status" value="2"/>
</dbReference>
<dbReference type="HAMAP" id="MF_01152">
    <property type="entry name" value="DnaJ"/>
    <property type="match status" value="1"/>
</dbReference>
<dbReference type="InterPro" id="IPR012724">
    <property type="entry name" value="DnaJ"/>
</dbReference>
<dbReference type="InterPro" id="IPR002939">
    <property type="entry name" value="DnaJ_C"/>
</dbReference>
<dbReference type="InterPro" id="IPR001623">
    <property type="entry name" value="DnaJ_domain"/>
</dbReference>
<dbReference type="InterPro" id="IPR018253">
    <property type="entry name" value="DnaJ_domain_CS"/>
</dbReference>
<dbReference type="InterPro" id="IPR008971">
    <property type="entry name" value="HSP40/DnaJ_pept-bd"/>
</dbReference>
<dbReference type="InterPro" id="IPR001305">
    <property type="entry name" value="HSP_DnaJ_Cys-rich_dom"/>
</dbReference>
<dbReference type="InterPro" id="IPR036410">
    <property type="entry name" value="HSP_DnaJ_Cys-rich_dom_sf"/>
</dbReference>
<dbReference type="InterPro" id="IPR036869">
    <property type="entry name" value="J_dom_sf"/>
</dbReference>
<dbReference type="NCBIfam" id="TIGR02349">
    <property type="entry name" value="DnaJ_bact"/>
    <property type="match status" value="1"/>
</dbReference>
<dbReference type="NCBIfam" id="NF008035">
    <property type="entry name" value="PRK10767.1"/>
    <property type="match status" value="1"/>
</dbReference>
<dbReference type="PANTHER" id="PTHR43096:SF48">
    <property type="entry name" value="CHAPERONE PROTEIN DNAJ"/>
    <property type="match status" value="1"/>
</dbReference>
<dbReference type="PANTHER" id="PTHR43096">
    <property type="entry name" value="DNAJ HOMOLOG 1, MITOCHONDRIAL-RELATED"/>
    <property type="match status" value="1"/>
</dbReference>
<dbReference type="Pfam" id="PF00226">
    <property type="entry name" value="DnaJ"/>
    <property type="match status" value="1"/>
</dbReference>
<dbReference type="Pfam" id="PF01556">
    <property type="entry name" value="DnaJ_C"/>
    <property type="match status" value="1"/>
</dbReference>
<dbReference type="Pfam" id="PF00684">
    <property type="entry name" value="DnaJ_CXXCXGXG"/>
    <property type="match status" value="1"/>
</dbReference>
<dbReference type="PRINTS" id="PR00625">
    <property type="entry name" value="JDOMAIN"/>
</dbReference>
<dbReference type="SMART" id="SM00271">
    <property type="entry name" value="DnaJ"/>
    <property type="match status" value="1"/>
</dbReference>
<dbReference type="SUPFAM" id="SSF46565">
    <property type="entry name" value="Chaperone J-domain"/>
    <property type="match status" value="1"/>
</dbReference>
<dbReference type="SUPFAM" id="SSF57938">
    <property type="entry name" value="DnaJ/Hsp40 cysteine-rich domain"/>
    <property type="match status" value="1"/>
</dbReference>
<dbReference type="SUPFAM" id="SSF49493">
    <property type="entry name" value="HSP40/DnaJ peptide-binding domain"/>
    <property type="match status" value="2"/>
</dbReference>
<dbReference type="PROSITE" id="PS00636">
    <property type="entry name" value="DNAJ_1"/>
    <property type="match status" value="1"/>
</dbReference>
<dbReference type="PROSITE" id="PS50076">
    <property type="entry name" value="DNAJ_2"/>
    <property type="match status" value="1"/>
</dbReference>
<dbReference type="PROSITE" id="PS51188">
    <property type="entry name" value="ZF_CR"/>
    <property type="match status" value="1"/>
</dbReference>
<accession>Q6NCY3</accession>
<keyword id="KW-0143">Chaperone</keyword>
<keyword id="KW-0963">Cytoplasm</keyword>
<keyword id="KW-0235">DNA replication</keyword>
<keyword id="KW-0479">Metal-binding</keyword>
<keyword id="KW-0677">Repeat</keyword>
<keyword id="KW-0346">Stress response</keyword>
<keyword id="KW-0862">Zinc</keyword>
<keyword id="KW-0863">Zinc-finger</keyword>
<protein>
    <recommendedName>
        <fullName evidence="1">Chaperone protein DnaJ</fullName>
    </recommendedName>
</protein>
<reference key="1">
    <citation type="journal article" date="2004" name="Nat. Biotechnol.">
        <title>Complete genome sequence of the metabolically versatile photosynthetic bacterium Rhodopseudomonas palustris.</title>
        <authorList>
            <person name="Larimer F.W."/>
            <person name="Chain P."/>
            <person name="Hauser L."/>
            <person name="Lamerdin J.E."/>
            <person name="Malfatti S."/>
            <person name="Do L."/>
            <person name="Land M.L."/>
            <person name="Pelletier D.A."/>
            <person name="Beatty J.T."/>
            <person name="Lang A.S."/>
            <person name="Tabita F.R."/>
            <person name="Gibson J.L."/>
            <person name="Hanson T.E."/>
            <person name="Bobst C."/>
            <person name="Torres y Torres J.L."/>
            <person name="Peres C."/>
            <person name="Harrison F.H."/>
            <person name="Gibson J."/>
            <person name="Harwood C.S."/>
        </authorList>
    </citation>
    <scope>NUCLEOTIDE SEQUENCE [LARGE SCALE GENOMIC DNA]</scope>
    <source>
        <strain>ATCC BAA-98 / CGA009</strain>
    </source>
</reference>
<proteinExistence type="inferred from homology"/>
<organism>
    <name type="scientific">Rhodopseudomonas palustris (strain ATCC BAA-98 / CGA009)</name>
    <dbReference type="NCBI Taxonomy" id="258594"/>
    <lineage>
        <taxon>Bacteria</taxon>
        <taxon>Pseudomonadati</taxon>
        <taxon>Pseudomonadota</taxon>
        <taxon>Alphaproteobacteria</taxon>
        <taxon>Hyphomicrobiales</taxon>
        <taxon>Nitrobacteraceae</taxon>
        <taxon>Rhodopseudomonas</taxon>
    </lineage>
</organism>
<feature type="chain" id="PRO_0000070869" description="Chaperone protein DnaJ">
    <location>
        <begin position="1"/>
        <end position="379"/>
    </location>
</feature>
<feature type="domain" description="J" evidence="1">
    <location>
        <begin position="7"/>
        <end position="72"/>
    </location>
</feature>
<feature type="repeat" description="CXXCXGXG motif">
    <location>
        <begin position="148"/>
        <end position="155"/>
    </location>
</feature>
<feature type="repeat" description="CXXCXGXG motif">
    <location>
        <begin position="165"/>
        <end position="172"/>
    </location>
</feature>
<feature type="repeat" description="CXXCXGXG motif">
    <location>
        <begin position="187"/>
        <end position="194"/>
    </location>
</feature>
<feature type="repeat" description="CXXCXGXG motif">
    <location>
        <begin position="201"/>
        <end position="208"/>
    </location>
</feature>
<feature type="zinc finger region" description="CR-type" evidence="1">
    <location>
        <begin position="135"/>
        <end position="213"/>
    </location>
</feature>
<feature type="binding site" evidence="1">
    <location>
        <position position="148"/>
    </location>
    <ligand>
        <name>Zn(2+)</name>
        <dbReference type="ChEBI" id="CHEBI:29105"/>
        <label>1</label>
    </ligand>
</feature>
<feature type="binding site" evidence="1">
    <location>
        <position position="151"/>
    </location>
    <ligand>
        <name>Zn(2+)</name>
        <dbReference type="ChEBI" id="CHEBI:29105"/>
        <label>1</label>
    </ligand>
</feature>
<feature type="binding site" evidence="1">
    <location>
        <position position="165"/>
    </location>
    <ligand>
        <name>Zn(2+)</name>
        <dbReference type="ChEBI" id="CHEBI:29105"/>
        <label>2</label>
    </ligand>
</feature>
<feature type="binding site" evidence="1">
    <location>
        <position position="168"/>
    </location>
    <ligand>
        <name>Zn(2+)</name>
        <dbReference type="ChEBI" id="CHEBI:29105"/>
        <label>2</label>
    </ligand>
</feature>
<feature type="binding site" evidence="1">
    <location>
        <position position="187"/>
    </location>
    <ligand>
        <name>Zn(2+)</name>
        <dbReference type="ChEBI" id="CHEBI:29105"/>
        <label>2</label>
    </ligand>
</feature>
<feature type="binding site" evidence="1">
    <location>
        <position position="190"/>
    </location>
    <ligand>
        <name>Zn(2+)</name>
        <dbReference type="ChEBI" id="CHEBI:29105"/>
        <label>2</label>
    </ligand>
</feature>
<feature type="binding site" evidence="1">
    <location>
        <position position="201"/>
    </location>
    <ligand>
        <name>Zn(2+)</name>
        <dbReference type="ChEBI" id="CHEBI:29105"/>
        <label>1</label>
    </ligand>
</feature>
<feature type="binding site" evidence="1">
    <location>
        <position position="204"/>
    </location>
    <ligand>
        <name>Zn(2+)</name>
        <dbReference type="ChEBI" id="CHEBI:29105"/>
        <label>1</label>
    </ligand>
</feature>
<sequence>MSTTKRCYYETLEVERNADDSTLKSAFRKLAMKWHPDRNPGDPQCEIKFKEINEAYEVLKDGDKRAAYDRYGHAAFEQGGFGGGAGFGAGFASSFSDIFEDLFGMAAQRGRGTGRERGADLRYNMEITLEDAFKGKTAQIEIPVSVTCEACSGTGAKAGTKPKTCSTCGGAGRVRQAQGFFTLERTCPSCQGRGQTIEDPCPSCTGSGRVTKERTLSVNIPQGVEDGTRIRLAGEGEAGLRGGPPGDLYIFLSLANHAIFQRDGADLHCRVPISMVTAALGGEFEVPTIDRGKTKVKVPSGTQTGRRFRIAGKGMPVLRSRQVGDMYVQVVVETPQNLTKKQQELLAEFEKLSSGETQPEAVGFFSKVKEFFGSRASAP</sequence>